<gene>
    <name evidence="1" type="primary">rpmA</name>
    <name type="ordered locus">Sare_3859</name>
</gene>
<feature type="chain" id="PRO_1000081906" description="Large ribosomal subunit protein bL27">
    <location>
        <begin position="1"/>
        <end position="84"/>
    </location>
</feature>
<feature type="region of interest" description="Disordered" evidence="2">
    <location>
        <begin position="1"/>
        <end position="23"/>
    </location>
</feature>
<comment type="similarity">
    <text evidence="1">Belongs to the bacterial ribosomal protein bL27 family.</text>
</comment>
<evidence type="ECO:0000255" key="1">
    <source>
        <dbReference type="HAMAP-Rule" id="MF_00539"/>
    </source>
</evidence>
<evidence type="ECO:0000256" key="2">
    <source>
        <dbReference type="SAM" id="MobiDB-lite"/>
    </source>
</evidence>
<evidence type="ECO:0000305" key="3"/>
<sequence>MAHKKGASSSRNGRESAAQRLGVKRFGGQRVNAGEIIIRQRGTKFHPGDLVGRGRDDTLFALAAGSVQFGTKRGRKTVSIVPQQ</sequence>
<accession>A8M0Z0</accession>
<keyword id="KW-0687">Ribonucleoprotein</keyword>
<keyword id="KW-0689">Ribosomal protein</keyword>
<protein>
    <recommendedName>
        <fullName evidence="1">Large ribosomal subunit protein bL27</fullName>
    </recommendedName>
    <alternativeName>
        <fullName evidence="3">50S ribosomal protein L27</fullName>
    </alternativeName>
</protein>
<name>RL27_SALAI</name>
<dbReference type="EMBL" id="CP000850">
    <property type="protein sequence ID" value="ABV99651.1"/>
    <property type="molecule type" value="Genomic_DNA"/>
</dbReference>
<dbReference type="SMR" id="A8M0Z0"/>
<dbReference type="STRING" id="391037.Sare_3859"/>
<dbReference type="KEGG" id="saq:Sare_3859"/>
<dbReference type="PATRIC" id="fig|391037.6.peg.3888"/>
<dbReference type="eggNOG" id="COG0211">
    <property type="taxonomic scope" value="Bacteria"/>
</dbReference>
<dbReference type="HOGENOM" id="CLU_095424_4_0_11"/>
<dbReference type="OrthoDB" id="9803474at2"/>
<dbReference type="GO" id="GO:0022625">
    <property type="term" value="C:cytosolic large ribosomal subunit"/>
    <property type="evidence" value="ECO:0007669"/>
    <property type="project" value="TreeGrafter"/>
</dbReference>
<dbReference type="GO" id="GO:0003735">
    <property type="term" value="F:structural constituent of ribosome"/>
    <property type="evidence" value="ECO:0007669"/>
    <property type="project" value="InterPro"/>
</dbReference>
<dbReference type="GO" id="GO:0006412">
    <property type="term" value="P:translation"/>
    <property type="evidence" value="ECO:0007669"/>
    <property type="project" value="UniProtKB-UniRule"/>
</dbReference>
<dbReference type="FunFam" id="2.40.50.100:FF:000020">
    <property type="entry name" value="50S ribosomal protein L27"/>
    <property type="match status" value="1"/>
</dbReference>
<dbReference type="Gene3D" id="2.40.50.100">
    <property type="match status" value="1"/>
</dbReference>
<dbReference type="HAMAP" id="MF_00539">
    <property type="entry name" value="Ribosomal_bL27"/>
    <property type="match status" value="1"/>
</dbReference>
<dbReference type="InterPro" id="IPR001684">
    <property type="entry name" value="Ribosomal_bL27"/>
</dbReference>
<dbReference type="InterPro" id="IPR018261">
    <property type="entry name" value="Ribosomal_bL27_CS"/>
</dbReference>
<dbReference type="NCBIfam" id="TIGR00062">
    <property type="entry name" value="L27"/>
    <property type="match status" value="1"/>
</dbReference>
<dbReference type="PANTHER" id="PTHR15893:SF0">
    <property type="entry name" value="LARGE RIBOSOMAL SUBUNIT PROTEIN BL27M"/>
    <property type="match status" value="1"/>
</dbReference>
<dbReference type="PANTHER" id="PTHR15893">
    <property type="entry name" value="RIBOSOMAL PROTEIN L27"/>
    <property type="match status" value="1"/>
</dbReference>
<dbReference type="Pfam" id="PF01016">
    <property type="entry name" value="Ribosomal_L27"/>
    <property type="match status" value="1"/>
</dbReference>
<dbReference type="PRINTS" id="PR00063">
    <property type="entry name" value="RIBOSOMALL27"/>
</dbReference>
<dbReference type="SUPFAM" id="SSF110324">
    <property type="entry name" value="Ribosomal L27 protein-like"/>
    <property type="match status" value="1"/>
</dbReference>
<dbReference type="PROSITE" id="PS00831">
    <property type="entry name" value="RIBOSOMAL_L27"/>
    <property type="match status" value="1"/>
</dbReference>
<reference key="1">
    <citation type="submission" date="2007-10" db="EMBL/GenBank/DDBJ databases">
        <title>Complete sequence of Salinispora arenicola CNS-205.</title>
        <authorList>
            <consortium name="US DOE Joint Genome Institute"/>
            <person name="Copeland A."/>
            <person name="Lucas S."/>
            <person name="Lapidus A."/>
            <person name="Barry K."/>
            <person name="Glavina del Rio T."/>
            <person name="Dalin E."/>
            <person name="Tice H."/>
            <person name="Pitluck S."/>
            <person name="Foster B."/>
            <person name="Schmutz J."/>
            <person name="Larimer F."/>
            <person name="Land M."/>
            <person name="Hauser L."/>
            <person name="Kyrpides N."/>
            <person name="Ivanova N."/>
            <person name="Jensen P.R."/>
            <person name="Moore B.S."/>
            <person name="Penn K."/>
            <person name="Jenkins C."/>
            <person name="Udwary D."/>
            <person name="Xiang L."/>
            <person name="Gontang E."/>
            <person name="Richardson P."/>
        </authorList>
    </citation>
    <scope>NUCLEOTIDE SEQUENCE [LARGE SCALE GENOMIC DNA]</scope>
    <source>
        <strain>CNS-205</strain>
    </source>
</reference>
<organism>
    <name type="scientific">Salinispora arenicola (strain CNS-205)</name>
    <dbReference type="NCBI Taxonomy" id="391037"/>
    <lineage>
        <taxon>Bacteria</taxon>
        <taxon>Bacillati</taxon>
        <taxon>Actinomycetota</taxon>
        <taxon>Actinomycetes</taxon>
        <taxon>Micromonosporales</taxon>
        <taxon>Micromonosporaceae</taxon>
        <taxon>Salinispora</taxon>
    </lineage>
</organism>
<proteinExistence type="inferred from homology"/>